<organism>
    <name type="scientific">Verticillium dahliae (strain VdLs.17 / ATCC MYA-4575 / FGSC 10137)</name>
    <name type="common">Verticillium wilt</name>
    <dbReference type="NCBI Taxonomy" id="498257"/>
    <lineage>
        <taxon>Eukaryota</taxon>
        <taxon>Fungi</taxon>
        <taxon>Dikarya</taxon>
        <taxon>Ascomycota</taxon>
        <taxon>Pezizomycotina</taxon>
        <taxon>Sordariomycetes</taxon>
        <taxon>Hypocreomycetidae</taxon>
        <taxon>Glomerellales</taxon>
        <taxon>Plectosphaerellaceae</taxon>
        <taxon>Verticillium</taxon>
    </lineage>
</organism>
<gene>
    <name evidence="4" type="primary">SCP41</name>
    <name evidence="6" type="ORF">VDAG_08202</name>
</gene>
<sequence>MRTETASLLLLAALSVAEELTPNDVPLACANMCGPIVELSYKCDVDGTDELRKLKRRKLFSPQQQQQQQQQQQQSAPKAKRQADPEPQAPAPVPSSTNNQQAADVIFIPGSIGKFKTIPTPLPPADTGVPSMAVTPAAPAPTLPVLDLRPTTTPTNLNPNLPILATPILPSVPASTPLATASSTQVPLPVGNEADAGDGVDAGPAPSNSLNGNVGDMVDDAGNLWPGQKGRQAASDLETACICSNTSFNVRRVAGLCGDCLEQVSGDQGPMRAILASCNFTTERYEPEKESLVANVRVEATKPSFTQTAAASYSWRVSGPTWAVVVGAGMLLGMGW</sequence>
<dbReference type="EMBL" id="DS572713">
    <property type="protein sequence ID" value="EGY17038.1"/>
    <property type="molecule type" value="Genomic_DNA"/>
</dbReference>
<dbReference type="RefSeq" id="XP_009655874.1">
    <property type="nucleotide sequence ID" value="XM_009657579.1"/>
</dbReference>
<dbReference type="EnsemblFungi" id="EGY17038">
    <property type="protein sequence ID" value="EGY17038"/>
    <property type="gene ID" value="VDAG_08202"/>
</dbReference>
<dbReference type="GeneID" id="20709665"/>
<dbReference type="KEGG" id="vda:VDAG_08202"/>
<dbReference type="eggNOG" id="ENOG502T4K5">
    <property type="taxonomic scope" value="Eukaryota"/>
</dbReference>
<dbReference type="HOGENOM" id="CLU_083378_0_0_1"/>
<dbReference type="InParanoid" id="G2XDH0"/>
<dbReference type="OMA" id="ATICGPM"/>
<dbReference type="OrthoDB" id="54828at1028384"/>
<dbReference type="PHI-base" id="PHI:123010"/>
<dbReference type="Proteomes" id="UP000001611">
    <property type="component" value="Chromosome 6"/>
</dbReference>
<dbReference type="GO" id="GO:0005576">
    <property type="term" value="C:extracellular region"/>
    <property type="evidence" value="ECO:0000314"/>
    <property type="project" value="UniProtKB"/>
</dbReference>
<dbReference type="GO" id="GO:0042025">
    <property type="term" value="C:host cell nucleus"/>
    <property type="evidence" value="ECO:0000314"/>
    <property type="project" value="UniProtKB"/>
</dbReference>
<dbReference type="GO" id="GO:0140416">
    <property type="term" value="F:transcription regulator inhibitor activity"/>
    <property type="evidence" value="ECO:0000353"/>
    <property type="project" value="UniProtKB"/>
</dbReference>
<dbReference type="GO" id="GO:0140403">
    <property type="term" value="P:effector-mediated suppression of host innate immune response"/>
    <property type="evidence" value="ECO:0000315"/>
    <property type="project" value="UniProtKB"/>
</dbReference>
<comment type="function">
    <text evidence="3">Effector that binds transcription regulators in the host plant to suppress the host's innate immune response (PubMed:29757140). Inhibits the host plant transcription regulators CBP60G and SARD1 (PubMed:29757140).</text>
</comment>
<comment type="subunit">
    <text evidence="3">Interacts with A.thaliana CBP60G; the interaction is direct (PubMed:29757140). Interacts with A.thaliana SARD1 (PubMed:29757140). Interacts with G.hirsutum CBP60B (PubMed:29757140).</text>
</comment>
<comment type="subcellular location">
    <subcellularLocation>
        <location evidence="3">Secreted</location>
    </subcellularLocation>
    <subcellularLocation>
        <location evidence="3">Host nucleus</location>
    </subcellularLocation>
</comment>
<comment type="induction">
    <text evidence="3">Expression is induced by plant roots.</text>
</comment>
<comment type="disruption phenotype">
    <text evidence="3">Decreases virulence in A.thaliana and G.hirsutum.</text>
</comment>
<protein>
    <recommendedName>
        <fullName evidence="4">Effector SCP41</fullName>
    </recommendedName>
    <alternativeName>
        <fullName evidence="4">Cysteine-containing protein 41</fullName>
    </alternativeName>
    <alternativeName>
        <fullName evidence="4">VdSCP41</fullName>
    </alternativeName>
</protein>
<name>SCP41_VERDV</name>
<evidence type="ECO:0000255" key="1"/>
<evidence type="ECO:0000256" key="2">
    <source>
        <dbReference type="SAM" id="MobiDB-lite"/>
    </source>
</evidence>
<evidence type="ECO:0000269" key="3">
    <source>
    </source>
</evidence>
<evidence type="ECO:0000303" key="4">
    <source>
    </source>
</evidence>
<evidence type="ECO:0000305" key="5"/>
<evidence type="ECO:0000312" key="6">
    <source>
        <dbReference type="EMBL" id="EGY17038.1"/>
    </source>
</evidence>
<accession>G2XDH0</accession>
<keyword id="KW-1048">Host nucleus</keyword>
<keyword id="KW-1185">Reference proteome</keyword>
<keyword id="KW-0964">Secreted</keyword>
<keyword id="KW-0732">Signal</keyword>
<keyword id="KW-0843">Virulence</keyword>
<feature type="signal peptide" evidence="1">
    <location>
        <begin position="1"/>
        <end position="19"/>
    </location>
</feature>
<feature type="chain" id="PRO_5003439752" description="Effector SCP41" evidence="1">
    <location>
        <begin position="20"/>
        <end position="336"/>
    </location>
</feature>
<feature type="region of interest" description="Disordered" evidence="2">
    <location>
        <begin position="59"/>
        <end position="99"/>
    </location>
</feature>
<feature type="region of interest" description="Disordered" evidence="2">
    <location>
        <begin position="189"/>
        <end position="230"/>
    </location>
</feature>
<feature type="compositionally biased region" description="Low complexity" evidence="2">
    <location>
        <begin position="63"/>
        <end position="74"/>
    </location>
</feature>
<feature type="mutagenesis site" description="Abolishes nuclear localization in host cell." evidence="3">
    <location>
        <begin position="52"/>
        <end position="60"/>
    </location>
</feature>
<reference key="1">
    <citation type="journal article" date="2011" name="PLoS Pathog.">
        <title>Comparative genomics yields insights into niche adaptation of plant vascular wilt pathogens.</title>
        <authorList>
            <person name="Klosterman S.J."/>
            <person name="Subbarao K.V."/>
            <person name="Kang S."/>
            <person name="Veronese P."/>
            <person name="Gold S.E."/>
            <person name="Thomma B.P.H.J."/>
            <person name="Chen Z."/>
            <person name="Henrissat B."/>
            <person name="Lee Y.-H."/>
            <person name="Park J."/>
            <person name="Garcia-Pedrajas M.D."/>
            <person name="Barbara D.J."/>
            <person name="Anchieta A."/>
            <person name="de Jonge R."/>
            <person name="Santhanam P."/>
            <person name="Maruthachalam K."/>
            <person name="Atallah Z."/>
            <person name="Amyotte S.G."/>
            <person name="Paz Z."/>
            <person name="Inderbitzin P."/>
            <person name="Hayes R.J."/>
            <person name="Heiman D.I."/>
            <person name="Young S."/>
            <person name="Zeng Q."/>
            <person name="Engels R."/>
            <person name="Galagan J."/>
            <person name="Cuomo C.A."/>
            <person name="Dobinson K.F."/>
            <person name="Ma L.-J."/>
        </authorList>
    </citation>
    <scope>NUCLEOTIDE SEQUENCE [LARGE SCALE GENOMIC DNA]</scope>
    <source>
        <strain>VdLs.17 / ATCC MYA-4575 / FGSC 10137</strain>
    </source>
</reference>
<reference evidence="5" key="2">
    <citation type="journal article" date="2018" name="Elife">
        <title>The plant-specific transcription factors CBP60g and SARD1 are targeted by a Verticillium secretory protein VdSCP41 to modulate immunity.</title>
        <authorList>
            <person name="Qin J."/>
            <person name="Wang K."/>
            <person name="Sun L."/>
            <person name="Xing H."/>
            <person name="Wang S."/>
            <person name="Li L."/>
            <person name="Chen S."/>
            <person name="Guo H.S."/>
            <person name="Zhang J."/>
        </authorList>
    </citation>
    <scope>FUNCTION</scope>
    <scope>INTERACTION WITH A.THALIANA CBP60G AND SARD1</scope>
    <scope>SUBCELLULAR LOCATION</scope>
    <scope>INDUCTION</scope>
    <scope>DISRUPTION PHENOTYPE</scope>
    <scope>MUTAGENESIS OF 52-ARG--PHE-60</scope>
</reference>
<proteinExistence type="evidence at protein level"/>